<name>COQ4_BLAGS</name>
<organism>
    <name type="scientific">Blastomyces gilchristii (strain SLH14081)</name>
    <name type="common">Blastomyces dermatitidis</name>
    <dbReference type="NCBI Taxonomy" id="559298"/>
    <lineage>
        <taxon>Eukaryota</taxon>
        <taxon>Fungi</taxon>
        <taxon>Dikarya</taxon>
        <taxon>Ascomycota</taxon>
        <taxon>Pezizomycotina</taxon>
        <taxon>Eurotiomycetes</taxon>
        <taxon>Eurotiomycetidae</taxon>
        <taxon>Onygenales</taxon>
        <taxon>Ajellomycetaceae</taxon>
        <taxon>Blastomyces</taxon>
    </lineage>
</organism>
<keyword id="KW-0456">Lyase</keyword>
<keyword id="KW-0472">Membrane</keyword>
<keyword id="KW-0479">Metal-binding</keyword>
<keyword id="KW-0496">Mitochondrion</keyword>
<keyword id="KW-0999">Mitochondrion inner membrane</keyword>
<keyword id="KW-1185">Reference proteome</keyword>
<keyword id="KW-0831">Ubiquinone biosynthesis</keyword>
<keyword id="KW-0862">Zinc</keyword>
<comment type="function">
    <text evidence="1">Lyase that catalyzes the C1-decarboxylation of 4-hydroxy-3-methoxy-5-(all-trans-polyprenyl)benzoic acid into 2-methoxy-6-(all-trans-polyprenyl)phenol during ubiquinone biosynthesis.</text>
</comment>
<comment type="catalytic activity">
    <reaction evidence="1">
        <text>a 4-hydroxy-3-methoxy-5-(all-trans-polyprenyl)benzoate + H(+) = a 2-methoxy-6-(all-trans-polyprenyl)phenol + CO2</text>
        <dbReference type="Rhea" id="RHEA:81179"/>
        <dbReference type="Rhea" id="RHEA-COMP:9551"/>
        <dbReference type="Rhea" id="RHEA-COMP:10931"/>
        <dbReference type="ChEBI" id="CHEBI:15378"/>
        <dbReference type="ChEBI" id="CHEBI:16526"/>
        <dbReference type="ChEBI" id="CHEBI:62731"/>
        <dbReference type="ChEBI" id="CHEBI:84443"/>
        <dbReference type="EC" id="4.1.1.130"/>
    </reaction>
</comment>
<comment type="cofactor">
    <cofactor evidence="1">
        <name>Zn(2+)</name>
        <dbReference type="ChEBI" id="CHEBI:29105"/>
    </cofactor>
</comment>
<comment type="pathway">
    <text evidence="1">Cofactor biosynthesis; ubiquinone biosynthesis.</text>
</comment>
<comment type="subunit">
    <text evidence="1">Component of a multi-subunit COQ enzyme complex, composed of at least COQ3, COQ4, COQ5, COQ6, COQ7 and COQ9.</text>
</comment>
<comment type="subcellular location">
    <subcellularLocation>
        <location evidence="1">Mitochondrion inner membrane</location>
        <topology evidence="1">Peripheral membrane protein</topology>
        <orientation evidence="1">Matrix side</orientation>
    </subcellularLocation>
</comment>
<comment type="miscellaneous">
    <text evidence="1">This protein may be expected to contain an N-terminal transit peptide but none has been predicted.</text>
</comment>
<comment type="similarity">
    <text evidence="1">Belongs to the COQ4 family.</text>
</comment>
<accession>C5JV83</accession>
<accession>A0A179UUY1</accession>
<proteinExistence type="inferred from homology"/>
<feature type="chain" id="PRO_0000388092" description="Ubiquinone biosynthesis protein COQ4, mitochondrial">
    <location>
        <begin position="1"/>
        <end position="284"/>
    </location>
</feature>
<feature type="binding site" evidence="1">
    <location>
        <position position="165"/>
    </location>
    <ligand>
        <name>Zn(2+)</name>
        <dbReference type="ChEBI" id="CHEBI:29105"/>
    </ligand>
</feature>
<feature type="binding site" evidence="1">
    <location>
        <position position="166"/>
    </location>
    <ligand>
        <name>Zn(2+)</name>
        <dbReference type="ChEBI" id="CHEBI:29105"/>
    </ligand>
</feature>
<feature type="binding site" evidence="1">
    <location>
        <position position="169"/>
    </location>
    <ligand>
        <name>Zn(2+)</name>
        <dbReference type="ChEBI" id="CHEBI:29105"/>
    </ligand>
</feature>
<feature type="binding site" evidence="1">
    <location>
        <position position="181"/>
    </location>
    <ligand>
        <name>Zn(2+)</name>
        <dbReference type="ChEBI" id="CHEBI:29105"/>
    </ligand>
</feature>
<sequence length="284" mass="32170">MTPAVTQTILTVRIARPHGYGYVLLSRGFSALNRPPPNYPGHIPLTTFERGALAVGSAIGSLLNPRRGDLIAALGEATATPYFIYRLRDAMLSDPTGRRILRDRPRISSKTLSIEYLRSLPPNTVGRTYVGWLDREGVGPDTRAPVQYIDDEECAYVMQRYRECHDFYHAITGLPVVVEGEVALKTFEFANTLLPMTGLSMFAVMRLKPAERERFWKLHLPWAIRSGLASKEVINVYWEEQLERDANELREELGIEKPADLREIRKMMRRQKAAEEAAKAKDGQ</sequence>
<reference key="1">
    <citation type="journal article" date="2015" name="PLoS Genet.">
        <title>The dynamic genome and transcriptome of the human fungal pathogen Blastomyces and close relative Emmonsia.</title>
        <authorList>
            <person name="Munoz J.F."/>
            <person name="Gauthier G.M."/>
            <person name="Desjardins C.A."/>
            <person name="Gallo J.E."/>
            <person name="Holder J."/>
            <person name="Sullivan T.D."/>
            <person name="Marty A.J."/>
            <person name="Carmen J.C."/>
            <person name="Chen Z."/>
            <person name="Ding L."/>
            <person name="Gujja S."/>
            <person name="Magrini V."/>
            <person name="Misas E."/>
            <person name="Mitreva M."/>
            <person name="Priest M."/>
            <person name="Saif S."/>
            <person name="Whiston E.A."/>
            <person name="Young S."/>
            <person name="Zeng Q."/>
            <person name="Goldman W.E."/>
            <person name="Mardis E.R."/>
            <person name="Taylor J.W."/>
            <person name="McEwen J.G."/>
            <person name="Clay O.K."/>
            <person name="Klein B.S."/>
            <person name="Cuomo C.A."/>
        </authorList>
    </citation>
    <scope>NUCLEOTIDE SEQUENCE [LARGE SCALE GENOMIC DNA]</scope>
    <source>
        <strain>SLH14081</strain>
    </source>
</reference>
<gene>
    <name evidence="1" type="primary">COQ4</name>
    <name type="ORF">BDBG_06675</name>
</gene>
<protein>
    <recommendedName>
        <fullName evidence="1">Ubiquinone biosynthesis protein COQ4, mitochondrial</fullName>
    </recommendedName>
    <alternativeName>
        <fullName>4-hydroxy-3-methoxy-5-polyprenylbenzoate decarboxylase</fullName>
        <ecNumber evidence="1">4.1.1.130</ecNumber>
    </alternativeName>
    <alternativeName>
        <fullName evidence="1">Coenzyme Q biosynthesis protein 4</fullName>
    </alternativeName>
</protein>
<evidence type="ECO:0000255" key="1">
    <source>
        <dbReference type="HAMAP-Rule" id="MF_03111"/>
    </source>
</evidence>
<dbReference type="EC" id="4.1.1.130" evidence="1"/>
<dbReference type="EMBL" id="GG657461">
    <property type="protein sequence ID" value="OAT10897.1"/>
    <property type="molecule type" value="Genomic_DNA"/>
</dbReference>
<dbReference type="RefSeq" id="XP_002623236.1">
    <property type="nucleotide sequence ID" value="XM_002623190.1"/>
</dbReference>
<dbReference type="SMR" id="C5JV83"/>
<dbReference type="STRING" id="559298.C5JV83"/>
<dbReference type="GeneID" id="8503281"/>
<dbReference type="KEGG" id="bgh:BDBG_06675"/>
<dbReference type="VEuPathDB" id="FungiDB:BDBG_06675"/>
<dbReference type="HOGENOM" id="CLU_061241_0_0_1"/>
<dbReference type="OrthoDB" id="4249at2759"/>
<dbReference type="UniPathway" id="UPA00232"/>
<dbReference type="Proteomes" id="UP000002038">
    <property type="component" value="Unassembled WGS sequence"/>
</dbReference>
<dbReference type="GO" id="GO:0031314">
    <property type="term" value="C:extrinsic component of mitochondrial inner membrane"/>
    <property type="evidence" value="ECO:0007669"/>
    <property type="project" value="UniProtKB-UniRule"/>
</dbReference>
<dbReference type="GO" id="GO:0006744">
    <property type="term" value="P:ubiquinone biosynthetic process"/>
    <property type="evidence" value="ECO:0007669"/>
    <property type="project" value="UniProtKB-UniRule"/>
</dbReference>
<dbReference type="HAMAP" id="MF_03111">
    <property type="entry name" value="Coq4"/>
    <property type="match status" value="1"/>
</dbReference>
<dbReference type="InterPro" id="IPR007715">
    <property type="entry name" value="Coq4"/>
</dbReference>
<dbReference type="InterPro" id="IPR027540">
    <property type="entry name" value="Coq4_euk"/>
</dbReference>
<dbReference type="PANTHER" id="PTHR12922">
    <property type="entry name" value="UBIQUINONE BIOSYNTHESIS PROTEIN"/>
    <property type="match status" value="1"/>
</dbReference>
<dbReference type="PANTHER" id="PTHR12922:SF7">
    <property type="entry name" value="UBIQUINONE BIOSYNTHESIS PROTEIN COQ4 HOMOLOG, MITOCHONDRIAL"/>
    <property type="match status" value="1"/>
</dbReference>
<dbReference type="Pfam" id="PF05019">
    <property type="entry name" value="Coq4"/>
    <property type="match status" value="1"/>
</dbReference>